<reference key="1">
    <citation type="journal article" date="2005" name="J. Bacteriol.">
        <title>Insights on evolution of virulence and resistance from the complete genome analysis of an early methicillin-resistant Staphylococcus aureus strain and a biofilm-producing methicillin-resistant Staphylococcus epidermidis strain.</title>
        <authorList>
            <person name="Gill S.R."/>
            <person name="Fouts D.E."/>
            <person name="Archer G.L."/>
            <person name="Mongodin E.F."/>
            <person name="DeBoy R.T."/>
            <person name="Ravel J."/>
            <person name="Paulsen I.T."/>
            <person name="Kolonay J.F."/>
            <person name="Brinkac L.M."/>
            <person name="Beanan M.J."/>
            <person name="Dodson R.J."/>
            <person name="Daugherty S.C."/>
            <person name="Madupu R."/>
            <person name="Angiuoli S.V."/>
            <person name="Durkin A.S."/>
            <person name="Haft D.H."/>
            <person name="Vamathevan J.J."/>
            <person name="Khouri H."/>
            <person name="Utterback T.R."/>
            <person name="Lee C."/>
            <person name="Dimitrov G."/>
            <person name="Jiang L."/>
            <person name="Qin H."/>
            <person name="Weidman J."/>
            <person name="Tran K."/>
            <person name="Kang K.H."/>
            <person name="Hance I.R."/>
            <person name="Nelson K.E."/>
            <person name="Fraser C.M."/>
        </authorList>
    </citation>
    <scope>NUCLEOTIDE SEQUENCE [LARGE SCALE GENOMIC DNA]</scope>
    <source>
        <strain>COL</strain>
    </source>
</reference>
<name>ENGB_STAAC</name>
<dbReference type="EMBL" id="CP000046">
    <property type="protein sequence ID" value="AAW36825.1"/>
    <property type="molecule type" value="Genomic_DNA"/>
</dbReference>
<dbReference type="SMR" id="Q5HF99"/>
<dbReference type="KEGG" id="sac:SACOL1720"/>
<dbReference type="HOGENOM" id="CLU_033732_3_0_9"/>
<dbReference type="Proteomes" id="UP000000530">
    <property type="component" value="Chromosome"/>
</dbReference>
<dbReference type="GO" id="GO:0005829">
    <property type="term" value="C:cytosol"/>
    <property type="evidence" value="ECO:0007669"/>
    <property type="project" value="TreeGrafter"/>
</dbReference>
<dbReference type="GO" id="GO:0005525">
    <property type="term" value="F:GTP binding"/>
    <property type="evidence" value="ECO:0007669"/>
    <property type="project" value="UniProtKB-UniRule"/>
</dbReference>
<dbReference type="GO" id="GO:0046872">
    <property type="term" value="F:metal ion binding"/>
    <property type="evidence" value="ECO:0007669"/>
    <property type="project" value="UniProtKB-KW"/>
</dbReference>
<dbReference type="GO" id="GO:0000917">
    <property type="term" value="P:division septum assembly"/>
    <property type="evidence" value="ECO:0007669"/>
    <property type="project" value="UniProtKB-KW"/>
</dbReference>
<dbReference type="CDD" id="cd01876">
    <property type="entry name" value="YihA_EngB"/>
    <property type="match status" value="1"/>
</dbReference>
<dbReference type="FunFam" id="3.40.50.300:FF:000098">
    <property type="entry name" value="Probable GTP-binding protein EngB"/>
    <property type="match status" value="1"/>
</dbReference>
<dbReference type="Gene3D" id="3.40.50.300">
    <property type="entry name" value="P-loop containing nucleotide triphosphate hydrolases"/>
    <property type="match status" value="1"/>
</dbReference>
<dbReference type="HAMAP" id="MF_00321">
    <property type="entry name" value="GTPase_EngB"/>
    <property type="match status" value="1"/>
</dbReference>
<dbReference type="InterPro" id="IPR030393">
    <property type="entry name" value="G_ENGB_dom"/>
</dbReference>
<dbReference type="InterPro" id="IPR006073">
    <property type="entry name" value="GTP-bd"/>
</dbReference>
<dbReference type="InterPro" id="IPR019987">
    <property type="entry name" value="GTP-bd_ribosome_bio_YsxC"/>
</dbReference>
<dbReference type="InterPro" id="IPR027417">
    <property type="entry name" value="P-loop_NTPase"/>
</dbReference>
<dbReference type="NCBIfam" id="TIGR03598">
    <property type="entry name" value="GTPase_YsxC"/>
    <property type="match status" value="1"/>
</dbReference>
<dbReference type="PANTHER" id="PTHR11649:SF13">
    <property type="entry name" value="ENGB-TYPE G DOMAIN-CONTAINING PROTEIN"/>
    <property type="match status" value="1"/>
</dbReference>
<dbReference type="PANTHER" id="PTHR11649">
    <property type="entry name" value="MSS1/TRME-RELATED GTP-BINDING PROTEIN"/>
    <property type="match status" value="1"/>
</dbReference>
<dbReference type="Pfam" id="PF01926">
    <property type="entry name" value="MMR_HSR1"/>
    <property type="match status" value="1"/>
</dbReference>
<dbReference type="SUPFAM" id="SSF52540">
    <property type="entry name" value="P-loop containing nucleoside triphosphate hydrolases"/>
    <property type="match status" value="1"/>
</dbReference>
<dbReference type="PROSITE" id="PS51706">
    <property type="entry name" value="G_ENGB"/>
    <property type="match status" value="1"/>
</dbReference>
<gene>
    <name evidence="1" type="primary">engB</name>
    <name type="ordered locus">SACOL1720</name>
</gene>
<keyword id="KW-0131">Cell cycle</keyword>
<keyword id="KW-0132">Cell division</keyword>
<keyword id="KW-0342">GTP-binding</keyword>
<keyword id="KW-0460">Magnesium</keyword>
<keyword id="KW-0479">Metal-binding</keyword>
<keyword id="KW-0547">Nucleotide-binding</keyword>
<keyword id="KW-0717">Septation</keyword>
<sequence length="196" mass="22685">MKVNPNNIELIISAVKEEQYPETELSEVALSGRSNVGKSTFINSMIGRKNMARTSQQPGKTQTLNFYNIDEQLIFVDVPGYGYAKVSKTQREKFGKMIEEYITKRENLQLVIQLVDLRHDPTQDDILMYNYLKHFDIPTLVICTKEDKIPKGKVQKHIKNIKTQLDMDPDDTIVSYSSIQNNKQQQIWNLIEPYIS</sequence>
<comment type="function">
    <text evidence="1">Necessary for normal cell division and for the maintenance of normal septation.</text>
</comment>
<comment type="cofactor">
    <cofactor evidence="1">
        <name>Mg(2+)</name>
        <dbReference type="ChEBI" id="CHEBI:18420"/>
    </cofactor>
</comment>
<comment type="similarity">
    <text evidence="1">Belongs to the TRAFAC class TrmE-Era-EngA-EngB-Septin-like GTPase superfamily. EngB GTPase family.</text>
</comment>
<feature type="chain" id="PRO_0000157780" description="Probable GTP-binding protein EngB">
    <location>
        <begin position="1"/>
        <end position="196"/>
    </location>
</feature>
<feature type="domain" description="EngB-type G" evidence="1">
    <location>
        <begin position="24"/>
        <end position="196"/>
    </location>
</feature>
<feature type="binding site" evidence="1">
    <location>
        <begin position="32"/>
        <end position="39"/>
    </location>
    <ligand>
        <name>GTP</name>
        <dbReference type="ChEBI" id="CHEBI:37565"/>
    </ligand>
</feature>
<feature type="binding site" evidence="1">
    <location>
        <position position="39"/>
    </location>
    <ligand>
        <name>Mg(2+)</name>
        <dbReference type="ChEBI" id="CHEBI:18420"/>
    </ligand>
</feature>
<feature type="binding site" evidence="1">
    <location>
        <begin position="59"/>
        <end position="63"/>
    </location>
    <ligand>
        <name>GTP</name>
        <dbReference type="ChEBI" id="CHEBI:37565"/>
    </ligand>
</feature>
<feature type="binding site" evidence="1">
    <location>
        <position position="61"/>
    </location>
    <ligand>
        <name>Mg(2+)</name>
        <dbReference type="ChEBI" id="CHEBI:18420"/>
    </ligand>
</feature>
<feature type="binding site" evidence="1">
    <location>
        <begin position="77"/>
        <end position="80"/>
    </location>
    <ligand>
        <name>GTP</name>
        <dbReference type="ChEBI" id="CHEBI:37565"/>
    </ligand>
</feature>
<feature type="binding site" evidence="1">
    <location>
        <begin position="144"/>
        <end position="147"/>
    </location>
    <ligand>
        <name>GTP</name>
        <dbReference type="ChEBI" id="CHEBI:37565"/>
    </ligand>
</feature>
<feature type="binding site" evidence="1">
    <location>
        <begin position="176"/>
        <end position="178"/>
    </location>
    <ligand>
        <name>GTP</name>
        <dbReference type="ChEBI" id="CHEBI:37565"/>
    </ligand>
</feature>
<evidence type="ECO:0000255" key="1">
    <source>
        <dbReference type="HAMAP-Rule" id="MF_00321"/>
    </source>
</evidence>
<protein>
    <recommendedName>
        <fullName evidence="1">Probable GTP-binding protein EngB</fullName>
    </recommendedName>
</protein>
<proteinExistence type="inferred from homology"/>
<accession>Q5HF99</accession>
<organism>
    <name type="scientific">Staphylococcus aureus (strain COL)</name>
    <dbReference type="NCBI Taxonomy" id="93062"/>
    <lineage>
        <taxon>Bacteria</taxon>
        <taxon>Bacillati</taxon>
        <taxon>Bacillota</taxon>
        <taxon>Bacilli</taxon>
        <taxon>Bacillales</taxon>
        <taxon>Staphylococcaceae</taxon>
        <taxon>Staphylococcus</taxon>
    </lineage>
</organism>